<evidence type="ECO:0000250" key="1"/>
<evidence type="ECO:0000250" key="2">
    <source>
        <dbReference type="UniProtKB" id="O70309"/>
    </source>
</evidence>
<evidence type="ECO:0000250" key="3">
    <source>
        <dbReference type="UniProtKB" id="P05106"/>
    </source>
</evidence>
<evidence type="ECO:0000250" key="4">
    <source>
        <dbReference type="UniProtKB" id="P18084"/>
    </source>
</evidence>
<evidence type="ECO:0000255" key="5"/>
<evidence type="ECO:0000255" key="6">
    <source>
        <dbReference type="PROSITE-ProRule" id="PRU01392"/>
    </source>
</evidence>
<evidence type="ECO:0000269" key="7">
    <source>
    </source>
</evidence>
<evidence type="ECO:0000305" key="8"/>
<protein>
    <recommendedName>
        <fullName>Integrin beta-5</fullName>
    </recommendedName>
</protein>
<proteinExistence type="evidence at protein level"/>
<accession>P80747</accession>
<accession>A3KMX2</accession>
<feature type="signal peptide" evidence="7">
    <location>
        <begin position="1"/>
        <end position="24"/>
    </location>
</feature>
<feature type="chain" id="PRO_0000174221" description="Integrin beta-5">
    <location>
        <begin position="25"/>
        <end position="800"/>
    </location>
</feature>
<feature type="topological domain" description="Extracellular" evidence="5">
    <location>
        <begin position="25"/>
        <end position="722"/>
    </location>
</feature>
<feature type="transmembrane region" description="Helical" evidence="5">
    <location>
        <begin position="723"/>
        <end position="743"/>
    </location>
</feature>
<feature type="topological domain" description="Cytoplasmic" evidence="5">
    <location>
        <begin position="744"/>
        <end position="800"/>
    </location>
</feature>
<feature type="domain" description="PSI" evidence="5">
    <location>
        <begin position="27"/>
        <end position="76"/>
    </location>
</feature>
<feature type="domain" description="VWFA" evidence="3">
    <location>
        <begin position="136"/>
        <end position="378"/>
    </location>
</feature>
<feature type="domain" description="I-EGF 1" evidence="6">
    <location>
        <begin position="465"/>
        <end position="499"/>
    </location>
</feature>
<feature type="domain" description="I-EGF 2" evidence="6">
    <location>
        <begin position="500"/>
        <end position="549"/>
    </location>
</feature>
<feature type="domain" description="I-EGF 3" evidence="6">
    <location>
        <begin position="550"/>
        <end position="586"/>
    </location>
</feature>
<feature type="domain" description="I-EGF 4" evidence="6">
    <location>
        <begin position="587"/>
        <end position="626"/>
    </location>
</feature>
<feature type="binding site" description="in MIDAS binding site" evidence="3">
    <location>
        <position position="147"/>
    </location>
    <ligand>
        <name>Mg(2+)</name>
        <dbReference type="ChEBI" id="CHEBI:18420"/>
    </ligand>
</feature>
<feature type="binding site" description="in ADMIDAS binding site" evidence="3">
    <location>
        <position position="149"/>
    </location>
    <ligand>
        <name>Ca(2+)</name>
        <dbReference type="ChEBI" id="CHEBI:29108"/>
        <label>1</label>
    </ligand>
</feature>
<feature type="binding site" description="in MIDAS binding site" evidence="3">
    <location>
        <position position="149"/>
    </location>
    <ligand>
        <name>Mg(2+)</name>
        <dbReference type="ChEBI" id="CHEBI:18420"/>
    </ligand>
</feature>
<feature type="binding site" description="in ADMIDAS binding site" evidence="3">
    <location>
        <position position="152"/>
    </location>
    <ligand>
        <name>Ca(2+)</name>
        <dbReference type="ChEBI" id="CHEBI:29108"/>
        <label>1</label>
    </ligand>
</feature>
<feature type="binding site" description="in ADMIDAS binding site" evidence="3">
    <location>
        <position position="153"/>
    </location>
    <ligand>
        <name>Ca(2+)</name>
        <dbReference type="ChEBI" id="CHEBI:29108"/>
        <label>1</label>
    </ligand>
</feature>
<feature type="binding site" description="in LIMBS binding site" evidence="3">
    <location>
        <position position="184"/>
    </location>
    <ligand>
        <name>Ca(2+)</name>
        <dbReference type="ChEBI" id="CHEBI:29108"/>
        <label>2</label>
    </ligand>
</feature>
<feature type="binding site" description="in LIMBS binding site" evidence="3">
    <location>
        <position position="242"/>
    </location>
    <ligand>
        <name>Ca(2+)</name>
        <dbReference type="ChEBI" id="CHEBI:29108"/>
        <label>2</label>
    </ligand>
</feature>
<feature type="binding site" description="in LIMBS binding site" evidence="3">
    <location>
        <position position="244"/>
    </location>
    <ligand>
        <name>Ca(2+)</name>
        <dbReference type="ChEBI" id="CHEBI:29108"/>
        <label>2</label>
    </ligand>
</feature>
<feature type="binding site" description="in LIMBS binding site" evidence="3">
    <location>
        <position position="246"/>
    </location>
    <ligand>
        <name>Ca(2+)</name>
        <dbReference type="ChEBI" id="CHEBI:29108"/>
        <label>2</label>
    </ligand>
</feature>
<feature type="binding site" description="in LIMBS binding site" evidence="3">
    <location>
        <position position="247"/>
    </location>
    <ligand>
        <name>Ca(2+)</name>
        <dbReference type="ChEBI" id="CHEBI:29108"/>
        <label>2</label>
    </ligand>
</feature>
<feature type="binding site" description="in MIDAS binding site" evidence="3">
    <location>
        <position position="247"/>
    </location>
    <ligand>
        <name>Mg(2+)</name>
        <dbReference type="ChEBI" id="CHEBI:18420"/>
    </ligand>
</feature>
<feature type="binding site" description="in ADMIDAS binding site" evidence="3">
    <location>
        <position position="362"/>
    </location>
    <ligand>
        <name>Ca(2+)</name>
        <dbReference type="ChEBI" id="CHEBI:29108"/>
        <label>1</label>
    </ligand>
</feature>
<feature type="modified residue" description="Phosphoserine" evidence="4">
    <location>
        <position position="771"/>
    </location>
</feature>
<feature type="glycosylation site" description="N-linked (GlcNAc...) asparagine" evidence="5">
    <location>
        <position position="347"/>
    </location>
</feature>
<feature type="glycosylation site" description="N-linked (GlcNAc...) asparagine" evidence="5">
    <location>
        <position position="479"/>
    </location>
</feature>
<feature type="glycosylation site" description="N-linked (GlcNAc...) asparagine" evidence="5">
    <location>
        <position position="552"/>
    </location>
</feature>
<feature type="glycosylation site" description="N-linked (GlcNAc...) asparagine" evidence="5">
    <location>
        <position position="586"/>
    </location>
</feature>
<feature type="glycosylation site" description="N-linked (GlcNAc...) asparagine" evidence="5">
    <location>
        <position position="655"/>
    </location>
</feature>
<feature type="glycosylation site" description="N-linked (GlcNAc...) asparagine" evidence="5">
    <location>
        <position position="706"/>
    </location>
</feature>
<feature type="disulfide bond" evidence="3">
    <location>
        <begin position="28"/>
        <end position="46"/>
    </location>
</feature>
<feature type="disulfide bond" evidence="3">
    <location>
        <begin position="36"/>
        <end position="463"/>
    </location>
</feature>
<feature type="disulfide bond" evidence="3">
    <location>
        <begin position="39"/>
        <end position="64"/>
    </location>
</feature>
<feature type="disulfide bond" evidence="3">
    <location>
        <begin position="49"/>
        <end position="75"/>
    </location>
</feature>
<feature type="disulfide bond" evidence="3">
    <location>
        <begin position="202"/>
        <end position="211"/>
    </location>
</feature>
<feature type="disulfide bond" evidence="3">
    <location>
        <begin position="259"/>
        <end position="300"/>
    </location>
</feature>
<feature type="disulfide bond" evidence="3">
    <location>
        <begin position="401"/>
        <end position="413"/>
    </location>
</feature>
<feature type="disulfide bond" evidence="3">
    <location>
        <begin position="433"/>
        <end position="461"/>
    </location>
</feature>
<feature type="disulfide bond" evidence="6">
    <location>
        <begin position="465"/>
        <end position="484"/>
    </location>
</feature>
<feature type="disulfide bond" evidence="6">
    <location>
        <begin position="476"/>
        <end position="487"/>
    </location>
</feature>
<feature type="disulfide bond" evidence="6">
    <location>
        <begin position="489"/>
        <end position="498"/>
    </location>
</feature>
<feature type="disulfide bond" evidence="6">
    <location>
        <begin position="500"/>
        <end position="530"/>
    </location>
</feature>
<feature type="disulfide bond" evidence="6">
    <location>
        <begin position="513"/>
        <end position="528"/>
    </location>
</feature>
<feature type="disulfide bond" evidence="6">
    <location>
        <begin position="522"/>
        <end position="533"/>
    </location>
</feature>
<feature type="disulfide bond" evidence="6">
    <location>
        <begin position="535"/>
        <end position="548"/>
    </location>
</feature>
<feature type="disulfide bond" evidence="6">
    <location>
        <begin position="550"/>
        <end position="571"/>
    </location>
</feature>
<feature type="disulfide bond" evidence="6">
    <location>
        <begin position="555"/>
        <end position="569"/>
    </location>
</feature>
<feature type="disulfide bond" evidence="6">
    <location>
        <begin position="563"/>
        <end position="574"/>
    </location>
</feature>
<feature type="disulfide bond" evidence="6">
    <location>
        <begin position="576"/>
        <end position="585"/>
    </location>
</feature>
<feature type="disulfide bond" evidence="6">
    <location>
        <begin position="587"/>
        <end position="610"/>
    </location>
</feature>
<feature type="disulfide bond" evidence="6">
    <location>
        <begin position="594"/>
        <end position="608"/>
    </location>
</feature>
<feature type="disulfide bond" evidence="6">
    <location>
        <begin position="602"/>
        <end position="613"/>
    </location>
</feature>
<feature type="disulfide bond" evidence="6">
    <location>
        <begin position="615"/>
        <end position="625"/>
    </location>
</feature>
<feature type="disulfide bond" evidence="3">
    <location>
        <begin position="628"/>
        <end position="631"/>
    </location>
</feature>
<feature type="disulfide bond" evidence="3">
    <location>
        <begin position="635"/>
        <end position="683"/>
    </location>
</feature>
<feature type="disulfide bond" evidence="3">
    <location>
        <begin position="641"/>
        <end position="662"/>
    </location>
</feature>
<feature type="disulfide bond" evidence="3">
    <location>
        <begin position="644"/>
        <end position="658"/>
    </location>
</feature>
<feature type="disulfide bond" evidence="3">
    <location>
        <begin position="691"/>
        <end position="715"/>
    </location>
</feature>
<keyword id="KW-0106">Calcium</keyword>
<keyword id="KW-0130">Cell adhesion</keyword>
<keyword id="KW-1003">Cell membrane</keyword>
<keyword id="KW-0903">Direct protein sequencing</keyword>
<keyword id="KW-1015">Disulfide bond</keyword>
<keyword id="KW-0245">EGF-like domain</keyword>
<keyword id="KW-0325">Glycoprotein</keyword>
<keyword id="KW-0401">Integrin</keyword>
<keyword id="KW-0460">Magnesium</keyword>
<keyword id="KW-0472">Membrane</keyword>
<keyword id="KW-0479">Metal-binding</keyword>
<keyword id="KW-0597">Phosphoprotein</keyword>
<keyword id="KW-0675">Receptor</keyword>
<keyword id="KW-1185">Reference proteome</keyword>
<keyword id="KW-0677">Repeat</keyword>
<keyword id="KW-0732">Signal</keyword>
<keyword id="KW-0812">Transmembrane</keyword>
<keyword id="KW-1133">Transmembrane helix</keyword>
<dbReference type="EMBL" id="BC133358">
    <property type="protein sequence ID" value="AAI33359.1"/>
    <property type="molecule type" value="mRNA"/>
</dbReference>
<dbReference type="SMR" id="P80747"/>
<dbReference type="FunCoup" id="P80747">
    <property type="interactions" value="233"/>
</dbReference>
<dbReference type="STRING" id="9913.ENSBTAP00000018278"/>
<dbReference type="GlyCosmos" id="P80747">
    <property type="glycosylation" value="6 sites, No reported glycans"/>
</dbReference>
<dbReference type="GlyGen" id="P80747">
    <property type="glycosylation" value="6 sites"/>
</dbReference>
<dbReference type="PaxDb" id="9913-ENSBTAP00000018278"/>
<dbReference type="eggNOG" id="KOG1226">
    <property type="taxonomic scope" value="Eukaryota"/>
</dbReference>
<dbReference type="InParanoid" id="P80747"/>
<dbReference type="Proteomes" id="UP000009136">
    <property type="component" value="Unplaced"/>
</dbReference>
<dbReference type="GO" id="GO:0009986">
    <property type="term" value="C:cell surface"/>
    <property type="evidence" value="ECO:0000318"/>
    <property type="project" value="GO_Central"/>
</dbReference>
<dbReference type="GO" id="GO:0005925">
    <property type="term" value="C:focal adhesion"/>
    <property type="evidence" value="ECO:0000318"/>
    <property type="project" value="GO_Central"/>
</dbReference>
<dbReference type="GO" id="GO:0008305">
    <property type="term" value="C:integrin complex"/>
    <property type="evidence" value="ECO:0000318"/>
    <property type="project" value="GO_Central"/>
</dbReference>
<dbReference type="GO" id="GO:0005178">
    <property type="term" value="F:integrin binding"/>
    <property type="evidence" value="ECO:0000318"/>
    <property type="project" value="GO_Central"/>
</dbReference>
<dbReference type="GO" id="GO:0046872">
    <property type="term" value="F:metal ion binding"/>
    <property type="evidence" value="ECO:0007669"/>
    <property type="project" value="UniProtKB-KW"/>
</dbReference>
<dbReference type="GO" id="GO:0033627">
    <property type="term" value="P:cell adhesion mediated by integrin"/>
    <property type="evidence" value="ECO:0000318"/>
    <property type="project" value="GO_Central"/>
</dbReference>
<dbReference type="GO" id="GO:0016477">
    <property type="term" value="P:cell migration"/>
    <property type="evidence" value="ECO:0000318"/>
    <property type="project" value="GO_Central"/>
</dbReference>
<dbReference type="GO" id="GO:0098609">
    <property type="term" value="P:cell-cell adhesion"/>
    <property type="evidence" value="ECO:0000318"/>
    <property type="project" value="GO_Central"/>
</dbReference>
<dbReference type="GO" id="GO:0007160">
    <property type="term" value="P:cell-matrix adhesion"/>
    <property type="evidence" value="ECO:0000318"/>
    <property type="project" value="GO_Central"/>
</dbReference>
<dbReference type="GO" id="GO:0007229">
    <property type="term" value="P:integrin-mediated signaling pathway"/>
    <property type="evidence" value="ECO:0000318"/>
    <property type="project" value="GO_Central"/>
</dbReference>
<dbReference type="GO" id="GO:0043149">
    <property type="term" value="P:stress fiber assembly"/>
    <property type="evidence" value="ECO:0000318"/>
    <property type="project" value="GO_Central"/>
</dbReference>
<dbReference type="GO" id="GO:0007179">
    <property type="term" value="P:transforming growth factor beta receptor signaling pathway"/>
    <property type="evidence" value="ECO:0000318"/>
    <property type="project" value="GO_Central"/>
</dbReference>
<dbReference type="FunFam" id="1.20.5.100:FF:000006">
    <property type="entry name" value="Integrin beta"/>
    <property type="match status" value="1"/>
</dbReference>
<dbReference type="FunFam" id="2.10.25.10:FF:000043">
    <property type="entry name" value="Integrin beta"/>
    <property type="match status" value="1"/>
</dbReference>
<dbReference type="FunFam" id="2.10.25.10:FF:000075">
    <property type="entry name" value="Integrin beta"/>
    <property type="match status" value="1"/>
</dbReference>
<dbReference type="FunFam" id="2.10.25.10:FF:000258">
    <property type="entry name" value="Integrin beta"/>
    <property type="match status" value="1"/>
</dbReference>
<dbReference type="FunFam" id="2.60.40.1510:FF:000007">
    <property type="entry name" value="Integrin beta"/>
    <property type="match status" value="1"/>
</dbReference>
<dbReference type="FunFam" id="2.60.40.1510:FF:000021">
    <property type="entry name" value="Integrin beta"/>
    <property type="match status" value="1"/>
</dbReference>
<dbReference type="FunFam" id="3.30.1680.10:FF:000002">
    <property type="entry name" value="Integrin beta"/>
    <property type="match status" value="1"/>
</dbReference>
<dbReference type="FunFam" id="3.40.50.410:FF:000002">
    <property type="entry name" value="Integrin beta"/>
    <property type="match status" value="1"/>
</dbReference>
<dbReference type="FunFam" id="4.10.1240.30:FF:000001">
    <property type="entry name" value="Integrin beta"/>
    <property type="match status" value="1"/>
</dbReference>
<dbReference type="Gene3D" id="4.10.1240.30">
    <property type="match status" value="1"/>
</dbReference>
<dbReference type="Gene3D" id="1.20.5.100">
    <property type="entry name" value="Cytochrome c1, transmembrane anchor, C-terminal"/>
    <property type="match status" value="1"/>
</dbReference>
<dbReference type="Gene3D" id="2.10.25.10">
    <property type="entry name" value="Laminin"/>
    <property type="match status" value="4"/>
</dbReference>
<dbReference type="Gene3D" id="3.30.1680.10">
    <property type="entry name" value="ligand-binding face of the semaphorins, domain 2"/>
    <property type="match status" value="1"/>
</dbReference>
<dbReference type="Gene3D" id="2.60.40.1510">
    <property type="entry name" value="ntegrin, alpha v. Chain A, domain 3"/>
    <property type="match status" value="1"/>
</dbReference>
<dbReference type="Gene3D" id="3.40.50.410">
    <property type="entry name" value="von Willebrand factor, type A domain"/>
    <property type="match status" value="1"/>
</dbReference>
<dbReference type="InterPro" id="IPR013111">
    <property type="entry name" value="EGF_extracell"/>
</dbReference>
<dbReference type="InterPro" id="IPR040622">
    <property type="entry name" value="I-EGF_1"/>
</dbReference>
<dbReference type="InterPro" id="IPR033760">
    <property type="entry name" value="Integrin_beta_N"/>
</dbReference>
<dbReference type="InterPro" id="IPR015812">
    <property type="entry name" value="Integrin_bsu"/>
</dbReference>
<dbReference type="InterPro" id="IPR014836">
    <property type="entry name" value="Integrin_bsu_cyt_dom"/>
</dbReference>
<dbReference type="InterPro" id="IPR012896">
    <property type="entry name" value="Integrin_bsu_tail"/>
</dbReference>
<dbReference type="InterPro" id="IPR036349">
    <property type="entry name" value="Integrin_bsu_tail_dom_sf"/>
</dbReference>
<dbReference type="InterPro" id="IPR002369">
    <property type="entry name" value="Integrin_bsu_VWA"/>
</dbReference>
<dbReference type="InterPro" id="IPR032695">
    <property type="entry name" value="Integrin_dom_sf"/>
</dbReference>
<dbReference type="InterPro" id="IPR016201">
    <property type="entry name" value="PSI"/>
</dbReference>
<dbReference type="InterPro" id="IPR002035">
    <property type="entry name" value="VWF_A"/>
</dbReference>
<dbReference type="InterPro" id="IPR036465">
    <property type="entry name" value="vWFA_dom_sf"/>
</dbReference>
<dbReference type="PANTHER" id="PTHR10082">
    <property type="entry name" value="INTEGRIN BETA SUBUNIT"/>
    <property type="match status" value="1"/>
</dbReference>
<dbReference type="PANTHER" id="PTHR10082:SF26">
    <property type="entry name" value="INTEGRIN BETA-5"/>
    <property type="match status" value="1"/>
</dbReference>
<dbReference type="Pfam" id="PF07974">
    <property type="entry name" value="EGF_2"/>
    <property type="match status" value="1"/>
</dbReference>
<dbReference type="Pfam" id="PF23105">
    <property type="entry name" value="EGF_integrin"/>
    <property type="match status" value="1"/>
</dbReference>
<dbReference type="Pfam" id="PF18372">
    <property type="entry name" value="I-EGF_1"/>
    <property type="match status" value="1"/>
</dbReference>
<dbReference type="Pfam" id="PF08725">
    <property type="entry name" value="Integrin_b_cyt"/>
    <property type="match status" value="1"/>
</dbReference>
<dbReference type="Pfam" id="PF07965">
    <property type="entry name" value="Integrin_B_tail"/>
    <property type="match status" value="1"/>
</dbReference>
<dbReference type="Pfam" id="PF00362">
    <property type="entry name" value="Integrin_beta"/>
    <property type="match status" value="1"/>
</dbReference>
<dbReference type="Pfam" id="PF17205">
    <property type="entry name" value="PSI_integrin"/>
    <property type="match status" value="1"/>
</dbReference>
<dbReference type="PIRSF" id="PIRSF002512">
    <property type="entry name" value="Integrin_B"/>
    <property type="match status" value="1"/>
</dbReference>
<dbReference type="PRINTS" id="PR01186">
    <property type="entry name" value="INTEGRINB"/>
</dbReference>
<dbReference type="SMART" id="SM00187">
    <property type="entry name" value="INB"/>
    <property type="match status" value="1"/>
</dbReference>
<dbReference type="SMART" id="SM01241">
    <property type="entry name" value="Integrin_b_cyt"/>
    <property type="match status" value="1"/>
</dbReference>
<dbReference type="SMART" id="SM01242">
    <property type="entry name" value="Integrin_B_tail"/>
    <property type="match status" value="1"/>
</dbReference>
<dbReference type="SMART" id="SM00423">
    <property type="entry name" value="PSI"/>
    <property type="match status" value="1"/>
</dbReference>
<dbReference type="SMART" id="SM00327">
    <property type="entry name" value="VWA"/>
    <property type="match status" value="1"/>
</dbReference>
<dbReference type="SUPFAM" id="SSF57196">
    <property type="entry name" value="EGF/Laminin"/>
    <property type="match status" value="2"/>
</dbReference>
<dbReference type="SUPFAM" id="SSF69687">
    <property type="entry name" value="Integrin beta tail domain"/>
    <property type="match status" value="1"/>
</dbReference>
<dbReference type="SUPFAM" id="SSF69179">
    <property type="entry name" value="Integrin domains"/>
    <property type="match status" value="1"/>
</dbReference>
<dbReference type="SUPFAM" id="SSF103575">
    <property type="entry name" value="Plexin repeat"/>
    <property type="match status" value="1"/>
</dbReference>
<dbReference type="SUPFAM" id="SSF53300">
    <property type="entry name" value="vWA-like"/>
    <property type="match status" value="1"/>
</dbReference>
<dbReference type="PROSITE" id="PS00022">
    <property type="entry name" value="EGF_1"/>
    <property type="match status" value="2"/>
</dbReference>
<dbReference type="PROSITE" id="PS01186">
    <property type="entry name" value="EGF_2"/>
    <property type="match status" value="2"/>
</dbReference>
<dbReference type="PROSITE" id="PS00243">
    <property type="entry name" value="I_EGF_1"/>
    <property type="match status" value="2"/>
</dbReference>
<dbReference type="PROSITE" id="PS52047">
    <property type="entry name" value="I_EGF_2"/>
    <property type="match status" value="4"/>
</dbReference>
<organism>
    <name type="scientific">Bos taurus</name>
    <name type="common">Bovine</name>
    <dbReference type="NCBI Taxonomy" id="9913"/>
    <lineage>
        <taxon>Eukaryota</taxon>
        <taxon>Metazoa</taxon>
        <taxon>Chordata</taxon>
        <taxon>Craniata</taxon>
        <taxon>Vertebrata</taxon>
        <taxon>Euteleostomi</taxon>
        <taxon>Mammalia</taxon>
        <taxon>Eutheria</taxon>
        <taxon>Laurasiatheria</taxon>
        <taxon>Artiodactyla</taxon>
        <taxon>Ruminantia</taxon>
        <taxon>Pecora</taxon>
        <taxon>Bovidae</taxon>
        <taxon>Bovinae</taxon>
        <taxon>Bos</taxon>
    </lineage>
</organism>
<gene>
    <name type="primary">ITGB5</name>
</gene>
<sequence length="800" mass="88057">MPRAPALLFSCLLGLCALVPRLPGLNICTSGSATSCEECLLIHPKCAWCFKEDFGSLRSVTSRCDLKANLIRNGCGVEFESPASSTQVLRSLPLSSKGSSPAGSDVIQLTPQEVTVTLRPGDRTAFQLQVRQVEDYPVDLYYLMDLSLSMKDDLENIRSLGTKLAEEMRKLTSNFRLGFGSFVDKNISPFSYTAPRYQTNPCIGYKLFPNCVPSFGFRHLLPLTDRVDSFNEEVRKQRVSRNRDAPEGGFDAVLQAAVCKEKIGWRKDALHLLVFTTDDVPHIALDGKLGGLVQPHDGQCHLNEANEYTASNQMDYPSLALLGEKLAENNINLIFAVTKNHYMLYKNFTALIPGTTVEILHGDSKNILQLIINAYNSIRSKVELSVWDQPEDLNLFFTATCQDGVSYPGQRKCEGLKIGDTASFEVSVEARSCPSKHVQHTFTLRPVGFRDSLEVGVTYNCRCGCSAGLEPDSARCSSNGTYVCGLCECNPGYLGTRCECQEGESQSGYQNLCREAEGKPLCSGRGQCSCNQCSCFESEFGKIYGSFCECDNFSCARNKGVLCSGHGECHCGECKCHAGYIGDNCNCSTDISTCQARDGHICSDRGHCVCGQCQCTEPGAFGETCEKCPTCPDACSTKRDCVECLLLHSGSSADNQTCQNLCKDEVITRVDTIVKDDQEAVLCFYKTAKDCVMMFTYSELPSGKSNLTVLREPECGTAPSAMTILLAVVGSILLTGFALLVIWKLLVTIHDRREFAKFQSERSRARYEMASNPLYRKPISTHTVDFTFNKFNKSYNGTVD</sequence>
<reference key="1">
    <citation type="submission" date="2007-02" db="EMBL/GenBank/DDBJ databases">
        <authorList>
            <consortium name="NIH - Mammalian Gene Collection (MGC) project"/>
        </authorList>
    </citation>
    <scope>NUCLEOTIDE SEQUENCE [LARGE SCALE MRNA]</scope>
    <source>
        <strain>Hereford</strain>
        <tissue>Fetal skin</tissue>
    </source>
</reference>
<reference key="2">
    <citation type="journal article" date="1997" name="Biochemistry">
        <title>Bovine PAS-6/7 binds alpha v beta 5 integrins and anionic phospholipids through two domains.</title>
        <authorList>
            <person name="Andersen M.H."/>
            <person name="Berglund L."/>
            <person name="Rasmussen J.T."/>
            <person name="Petersen T.E."/>
        </authorList>
    </citation>
    <scope>PROTEIN SEQUENCE OF 25-37</scope>
    <source>
        <tissue>Mammary gland</tissue>
    </source>
</reference>
<comment type="function">
    <text>Integrin alpha-V/beta-5 (ITGAV:ITGB5) is a receptor for fibronectin. It recognizes the sequence R-G-D in its ligand.</text>
</comment>
<comment type="subunit">
    <text evidence="2 4">Heterodimer of an alpha and a beta subunit. Beta-5 (ITGB5) associates with alpha-V (ITGAV). Interacts with MYO10. Interacts with DAB2. Integrin ITGAV:ITGB5 interacts with FBLN5 (via N-terminus) (By similarity). ITGAV:ITGB5 interacts with CCN3 (By similarity). Interacts with tensin TNS3; TNS3 also interacts with PEAK1, thus acting as an adapter molecule to bridge the association of PEAK1 with ITGB5 (By similarity).</text>
</comment>
<comment type="subcellular location">
    <subcellularLocation>
        <location evidence="1">Cell membrane</location>
        <topology evidence="1">Single-pass type I membrane protein</topology>
    </subcellularLocation>
</comment>
<comment type="domain">
    <text evidence="3">The VWFA domain (or beta I domain) contains three cation-binding sites: the ligand-associated metal ion-binding site (LIMBS or SyMBS), the metal ion-dependent adhesion site (MIDAS), and the adjacent MIDAS site (ADMIDAS). This domain is also part of the ligand-binding site.</text>
</comment>
<comment type="similarity">
    <text evidence="8">Belongs to the integrin beta chain family.</text>
</comment>
<name>ITB5_BOVIN</name>